<keyword id="KW-0119">Carbohydrate metabolism</keyword>
<keyword id="KW-1003">Cell membrane</keyword>
<keyword id="KW-0136">Cellulose degradation</keyword>
<keyword id="KW-0325">Glycoprotein</keyword>
<keyword id="KW-0326">Glycosidase</keyword>
<keyword id="KW-0336">GPI-anchor</keyword>
<keyword id="KW-0378">Hydrolase</keyword>
<keyword id="KW-0449">Lipoprotein</keyword>
<keyword id="KW-0472">Membrane</keyword>
<keyword id="KW-0624">Polysaccharide degradation</keyword>
<keyword id="KW-1185">Reference proteome</keyword>
<keyword id="KW-0732">Signal</keyword>
<dbReference type="EC" id="3.2.1.6"/>
<dbReference type="EMBL" id="AACD01000039">
    <property type="protein sequence ID" value="EAA64496.1"/>
    <property type="molecule type" value="Genomic_DNA"/>
</dbReference>
<dbReference type="EMBL" id="BN001307">
    <property type="protein sequence ID" value="CBF86736.1"/>
    <property type="molecule type" value="Genomic_DNA"/>
</dbReference>
<dbReference type="RefSeq" id="XP_659989.1">
    <property type="nucleotide sequence ID" value="XM_654897.1"/>
</dbReference>
<dbReference type="SMR" id="Q5BAP5"/>
<dbReference type="STRING" id="227321.Q5BAP5"/>
<dbReference type="CAZy" id="GH16">
    <property type="family name" value="Glycoside Hydrolase Family 16"/>
</dbReference>
<dbReference type="GlyCosmos" id="Q5BAP5">
    <property type="glycosylation" value="1 site, No reported glycans"/>
</dbReference>
<dbReference type="EnsemblFungi" id="CBF86736">
    <property type="protein sequence ID" value="CBF86736"/>
    <property type="gene ID" value="ANIA_02385"/>
</dbReference>
<dbReference type="KEGG" id="ani:ANIA_02385"/>
<dbReference type="VEuPathDB" id="FungiDB:AN2385"/>
<dbReference type="eggNOG" id="ENOG502QUM3">
    <property type="taxonomic scope" value="Eukaryota"/>
</dbReference>
<dbReference type="HOGENOM" id="CLU_016972_4_0_1"/>
<dbReference type="InParanoid" id="Q5BAP5"/>
<dbReference type="OMA" id="FYMGVDY"/>
<dbReference type="OrthoDB" id="192832at2759"/>
<dbReference type="Proteomes" id="UP000000560">
    <property type="component" value="Chromosome VII"/>
</dbReference>
<dbReference type="GO" id="GO:0005886">
    <property type="term" value="C:plasma membrane"/>
    <property type="evidence" value="ECO:0007669"/>
    <property type="project" value="UniProtKB-SubCell"/>
</dbReference>
<dbReference type="GO" id="GO:0098552">
    <property type="term" value="C:side of membrane"/>
    <property type="evidence" value="ECO:0007669"/>
    <property type="project" value="UniProtKB-KW"/>
</dbReference>
<dbReference type="GO" id="GO:0052861">
    <property type="term" value="F:endo-1,3(4)-beta-glucanase activity"/>
    <property type="evidence" value="ECO:0007669"/>
    <property type="project" value="UniProtKB-EC"/>
</dbReference>
<dbReference type="GO" id="GO:0042972">
    <property type="term" value="F:licheninase activity"/>
    <property type="evidence" value="ECO:0000314"/>
    <property type="project" value="UniProtKB"/>
</dbReference>
<dbReference type="GO" id="GO:0030245">
    <property type="term" value="P:cellulose catabolic process"/>
    <property type="evidence" value="ECO:0007669"/>
    <property type="project" value="UniProtKB-KW"/>
</dbReference>
<dbReference type="GO" id="GO:0009251">
    <property type="term" value="P:glucan catabolic process"/>
    <property type="evidence" value="ECO:0000314"/>
    <property type="project" value="UniProtKB"/>
</dbReference>
<dbReference type="CDD" id="cd02181">
    <property type="entry name" value="GH16_fungal_Lam16A_glucanase"/>
    <property type="match status" value="1"/>
</dbReference>
<dbReference type="FunFam" id="2.60.120.200:FF:000114">
    <property type="entry name" value="Probable endo-1,3(4)-beta-glucanase NFIA_089530"/>
    <property type="match status" value="1"/>
</dbReference>
<dbReference type="Gene3D" id="2.60.120.200">
    <property type="match status" value="1"/>
</dbReference>
<dbReference type="InterPro" id="IPR013320">
    <property type="entry name" value="ConA-like_dom_sf"/>
</dbReference>
<dbReference type="InterPro" id="IPR000757">
    <property type="entry name" value="GH16"/>
</dbReference>
<dbReference type="InterPro" id="IPR050546">
    <property type="entry name" value="Glycosyl_Hydrlase_16"/>
</dbReference>
<dbReference type="PANTHER" id="PTHR10963:SF58">
    <property type="entry name" value="ENDO-1,3(4)-BETA-GLUCANASE XGEA"/>
    <property type="match status" value="1"/>
</dbReference>
<dbReference type="PANTHER" id="PTHR10963">
    <property type="entry name" value="GLYCOSYL HYDROLASE-RELATED"/>
    <property type="match status" value="1"/>
</dbReference>
<dbReference type="SUPFAM" id="SSF49899">
    <property type="entry name" value="Concanavalin A-like lectins/glucanases"/>
    <property type="match status" value="1"/>
</dbReference>
<dbReference type="PROSITE" id="PS51762">
    <property type="entry name" value="GH16_2"/>
    <property type="match status" value="1"/>
</dbReference>
<comment type="function">
    <text evidence="5">Mixed-linked glucanase involved in the degradation of complex natural cellulosic substrates. Active on laminarin. lichenan, soluble carboxymethyl cellulose but not on pustulan.</text>
</comment>
<comment type="catalytic activity">
    <reaction>
        <text>Endohydrolysis of (1-&gt;3)- or (1-&gt;4)-linkages in beta-D-glucans when the glucose residue whose reducing group is involved in the linkage to be hydrolyzed is itself substituted at C-3.</text>
        <dbReference type="EC" id="3.2.1.6"/>
    </reaction>
</comment>
<comment type="subcellular location">
    <subcellularLocation>
        <location evidence="1">Cell membrane</location>
        <topology evidence="1">Lipid-anchor</topology>
        <topology evidence="1">GPI-anchor</topology>
    </subcellularLocation>
</comment>
<comment type="similarity">
    <text evidence="6">Belongs to the glycosyl hydrolase 16 family.</text>
</comment>
<protein>
    <recommendedName>
        <fullName>Endo-1,3(4)-beta-glucanase xgeA</fullName>
        <ecNumber>3.2.1.6</ecNumber>
    </recommendedName>
    <alternativeName>
        <fullName>Mixed-linked glucanase xgeA</fullName>
    </alternativeName>
</protein>
<evidence type="ECO:0000250" key="1"/>
<evidence type="ECO:0000255" key="2"/>
<evidence type="ECO:0000255" key="3">
    <source>
        <dbReference type="PROSITE-ProRule" id="PRU01098"/>
    </source>
</evidence>
<evidence type="ECO:0000256" key="4">
    <source>
        <dbReference type="SAM" id="MobiDB-lite"/>
    </source>
</evidence>
<evidence type="ECO:0000269" key="5">
    <source>
    </source>
</evidence>
<evidence type="ECO:0000305" key="6"/>
<feature type="signal peptide" evidence="2">
    <location>
        <begin position="1"/>
        <end position="25"/>
    </location>
</feature>
<feature type="chain" id="PRO_0000395093" description="Endo-1,3(4)-beta-glucanase xgeA">
    <location>
        <begin position="26"/>
        <end position="603"/>
    </location>
</feature>
<feature type="propeptide" id="PRO_0000395094" description="Removed in mature form" evidence="2">
    <location>
        <begin position="604"/>
        <end position="626"/>
    </location>
</feature>
<feature type="domain" description="GH16" evidence="3">
    <location>
        <begin position="33"/>
        <end position="286"/>
    </location>
</feature>
<feature type="region of interest" description="Disordered" evidence="4">
    <location>
        <begin position="477"/>
        <end position="533"/>
    </location>
</feature>
<feature type="compositionally biased region" description="Low complexity" evidence="4">
    <location>
        <begin position="477"/>
        <end position="494"/>
    </location>
</feature>
<feature type="compositionally biased region" description="Polar residues" evidence="4">
    <location>
        <begin position="495"/>
        <end position="533"/>
    </location>
</feature>
<feature type="active site" description="Nucleophile" evidence="1">
    <location>
        <position position="142"/>
    </location>
</feature>
<feature type="active site" description="Proton donor" evidence="1">
    <location>
        <position position="147"/>
    </location>
</feature>
<feature type="lipid moiety-binding region" description="GPI-anchor amidated glycine" evidence="2">
    <location>
        <position position="603"/>
    </location>
</feature>
<feature type="glycosylation site" description="N-linked (GlcNAc...) asparagine" evidence="2">
    <location>
        <position position="61"/>
    </location>
</feature>
<gene>
    <name type="primary">xgeA</name>
    <name type="ORF">AN2385</name>
</gene>
<name>EGLX_EMENI</name>
<sequence length="626" mass="65098">MSSSLMRRVGSLAASAIIFPGIAHAASNYKLKESWEGEKILNHFHFFDNADPTNGFVTYVNQSYAESAGLVKTTDSGSLYLGVDYENVLTVDGPGRESVRIESNEYYDQGLYVVDIQHMPGSICGTWPAFWTVGPDWPTDGEIDIIEGVNKHDANKIVLHTSDTCDVGGGYKMTGDMTSSECGEASGTIGCVVQGKQGSSGDPFNEQGGGVYAMEWQEKYLKIWYFPRSSIPESLTAGTPDVSSFGTPMAHLQGSCNFKERFTHQKLILDTTFCGDWAGGVFGDSGCPVSDPSDPMLSCKNYVAENPAVYKNAYWELNSIKIYQLGGTAEVEGTQSAAAESTAAEATAAETTAAATQTANGGSIEEITTSTHSVTRTKTVSATHSTETAAVTETAAATTAAASVASEVDATNTQPVSKTKSTSYVTSTTTLCPVESSQAAATESVSRTKTTSYVTITTTLCPVESLQTANAVPSAKASTDAAAATTPAAEPHPSNAETPADSKSSADAVTAQATKTTIAVNTPNPATDSASSVPPDSIVYTAPEVTSSSSVPLFTIVSSSSQFVTVPTAAPSSFEPTDAVRDGADSYSTAASPTTPSNPVFTGVGSKVSISASVAIAAFVMLLLVN</sequence>
<reference key="1">
    <citation type="journal article" date="2005" name="Nature">
        <title>Sequencing of Aspergillus nidulans and comparative analysis with A. fumigatus and A. oryzae.</title>
        <authorList>
            <person name="Galagan J.E."/>
            <person name="Calvo S.E."/>
            <person name="Cuomo C."/>
            <person name="Ma L.-J."/>
            <person name="Wortman J.R."/>
            <person name="Batzoglou S."/>
            <person name="Lee S.-I."/>
            <person name="Bastuerkmen M."/>
            <person name="Spevak C.C."/>
            <person name="Clutterbuck J."/>
            <person name="Kapitonov V."/>
            <person name="Jurka J."/>
            <person name="Scazzocchio C."/>
            <person name="Farman M.L."/>
            <person name="Butler J."/>
            <person name="Purcell S."/>
            <person name="Harris S."/>
            <person name="Braus G.H."/>
            <person name="Draht O."/>
            <person name="Busch S."/>
            <person name="D'Enfert C."/>
            <person name="Bouchier C."/>
            <person name="Goldman G.H."/>
            <person name="Bell-Pedersen D."/>
            <person name="Griffiths-Jones S."/>
            <person name="Doonan J.H."/>
            <person name="Yu J."/>
            <person name="Vienken K."/>
            <person name="Pain A."/>
            <person name="Freitag M."/>
            <person name="Selker E.U."/>
            <person name="Archer D.B."/>
            <person name="Penalva M.A."/>
            <person name="Oakley B.R."/>
            <person name="Momany M."/>
            <person name="Tanaka T."/>
            <person name="Kumagai T."/>
            <person name="Asai K."/>
            <person name="Machida M."/>
            <person name="Nierman W.C."/>
            <person name="Denning D.W."/>
            <person name="Caddick M.X."/>
            <person name="Hynes M."/>
            <person name="Paoletti M."/>
            <person name="Fischer R."/>
            <person name="Miller B.L."/>
            <person name="Dyer P.S."/>
            <person name="Sachs M.S."/>
            <person name="Osmani S.A."/>
            <person name="Birren B.W."/>
        </authorList>
    </citation>
    <scope>NUCLEOTIDE SEQUENCE [LARGE SCALE GENOMIC DNA]</scope>
    <source>
        <strain>FGSC A4 / ATCC 38163 / CBS 112.46 / NRRL 194 / M139</strain>
    </source>
</reference>
<reference key="2">
    <citation type="journal article" date="2009" name="Fungal Genet. Biol.">
        <title>The 2008 update of the Aspergillus nidulans genome annotation: a community effort.</title>
        <authorList>
            <person name="Wortman J.R."/>
            <person name="Gilsenan J.M."/>
            <person name="Joardar V."/>
            <person name="Deegan J."/>
            <person name="Clutterbuck J."/>
            <person name="Andersen M.R."/>
            <person name="Archer D."/>
            <person name="Bencina M."/>
            <person name="Braus G."/>
            <person name="Coutinho P."/>
            <person name="von Dohren H."/>
            <person name="Doonan J."/>
            <person name="Driessen A.J."/>
            <person name="Durek P."/>
            <person name="Espeso E."/>
            <person name="Fekete E."/>
            <person name="Flipphi M."/>
            <person name="Estrada C.G."/>
            <person name="Geysens S."/>
            <person name="Goldman G."/>
            <person name="de Groot P.W."/>
            <person name="Hansen K."/>
            <person name="Harris S.D."/>
            <person name="Heinekamp T."/>
            <person name="Helmstaedt K."/>
            <person name="Henrissat B."/>
            <person name="Hofmann G."/>
            <person name="Homan T."/>
            <person name="Horio T."/>
            <person name="Horiuchi H."/>
            <person name="James S."/>
            <person name="Jones M."/>
            <person name="Karaffa L."/>
            <person name="Karanyi Z."/>
            <person name="Kato M."/>
            <person name="Keller N."/>
            <person name="Kelly D.E."/>
            <person name="Kiel J.A."/>
            <person name="Kim J.M."/>
            <person name="van der Klei I.J."/>
            <person name="Klis F.M."/>
            <person name="Kovalchuk A."/>
            <person name="Krasevec N."/>
            <person name="Kubicek C.P."/>
            <person name="Liu B."/>
            <person name="Maccabe A."/>
            <person name="Meyer V."/>
            <person name="Mirabito P."/>
            <person name="Miskei M."/>
            <person name="Mos M."/>
            <person name="Mullins J."/>
            <person name="Nelson D.R."/>
            <person name="Nielsen J."/>
            <person name="Oakley B.R."/>
            <person name="Osmani S.A."/>
            <person name="Pakula T."/>
            <person name="Paszewski A."/>
            <person name="Paulsen I."/>
            <person name="Pilsyk S."/>
            <person name="Pocsi I."/>
            <person name="Punt P.J."/>
            <person name="Ram A.F."/>
            <person name="Ren Q."/>
            <person name="Robellet X."/>
            <person name="Robson G."/>
            <person name="Seiboth B."/>
            <person name="van Solingen P."/>
            <person name="Specht T."/>
            <person name="Sun J."/>
            <person name="Taheri-Talesh N."/>
            <person name="Takeshita N."/>
            <person name="Ussery D."/>
            <person name="vanKuyk P.A."/>
            <person name="Visser H."/>
            <person name="van de Vondervoort P.J."/>
            <person name="de Vries R.P."/>
            <person name="Walton J."/>
            <person name="Xiang X."/>
            <person name="Xiong Y."/>
            <person name="Zeng A.P."/>
            <person name="Brandt B.W."/>
            <person name="Cornell M.J."/>
            <person name="van den Hondel C.A."/>
            <person name="Visser J."/>
            <person name="Oliver S.G."/>
            <person name="Turner G."/>
        </authorList>
    </citation>
    <scope>GENOME REANNOTATION</scope>
    <source>
        <strain>FGSC A4 / ATCC 38163 / CBS 112.46 / NRRL 194 / M139</strain>
    </source>
</reference>
<reference key="3">
    <citation type="journal article" date="2006" name="Proc. Natl. Acad. Sci. U.S.A.">
        <title>Development and application of a suite of polysaccharide-degrading enzymes for analyzing plant cell walls.</title>
        <authorList>
            <person name="Bauer S."/>
            <person name="Vasu P."/>
            <person name="Persson S."/>
            <person name="Mort A.J."/>
            <person name="Somerville C.R."/>
        </authorList>
    </citation>
    <scope>FUNCTION</scope>
    <source>
        <strain>FGSC A4 / ATCC 38163 / CBS 112.46 / NRRL 194 / M139</strain>
    </source>
</reference>
<organism>
    <name type="scientific">Emericella nidulans (strain FGSC A4 / ATCC 38163 / CBS 112.46 / NRRL 194 / M139)</name>
    <name type="common">Aspergillus nidulans</name>
    <dbReference type="NCBI Taxonomy" id="227321"/>
    <lineage>
        <taxon>Eukaryota</taxon>
        <taxon>Fungi</taxon>
        <taxon>Dikarya</taxon>
        <taxon>Ascomycota</taxon>
        <taxon>Pezizomycotina</taxon>
        <taxon>Eurotiomycetes</taxon>
        <taxon>Eurotiomycetidae</taxon>
        <taxon>Eurotiales</taxon>
        <taxon>Aspergillaceae</taxon>
        <taxon>Aspergillus</taxon>
        <taxon>Aspergillus subgen. Nidulantes</taxon>
    </lineage>
</organism>
<proteinExistence type="inferred from homology"/>
<accession>Q5BAP5</accession>
<accession>C8VNP1</accession>